<sequence length="325" mass="36185">MSWFTPELIEILISVLKAVVILLVVVTCGAFMSFGERRLLGLFQNRYGPNRVGWGGSLQLVADMIKMFFKEDWVPRFSDRAIFTLAPVIAFTSLLLSFAIVPVSPTWAVADLNIGILFFLMMAGLAVYAVLFAGWASNNKYSLLGAMRASAQTLSYEVFLGLSLMGVVAQAGSFNMQDIVNSQEHVWNVIPQFFGFLTFAIAGVAVCHRHPFDQPEAEQELADGYHIEYSGMKFGLFFVGEYIGIVTVSALIVTLFFGGWQGPFLPPFIWFALKTAFFMVMFILIRASLPRPRYDQVMSFGWKVCLPLTLLNLLATAAVILYNAQ</sequence>
<evidence type="ECO:0000255" key="1">
    <source>
        <dbReference type="HAMAP-Rule" id="MF_01350"/>
    </source>
</evidence>
<organism>
    <name type="scientific">Yersinia pestis bv. Antiqua (strain Angola)</name>
    <dbReference type="NCBI Taxonomy" id="349746"/>
    <lineage>
        <taxon>Bacteria</taxon>
        <taxon>Pseudomonadati</taxon>
        <taxon>Pseudomonadota</taxon>
        <taxon>Gammaproteobacteria</taxon>
        <taxon>Enterobacterales</taxon>
        <taxon>Yersiniaceae</taxon>
        <taxon>Yersinia</taxon>
    </lineage>
</organism>
<protein>
    <recommendedName>
        <fullName evidence="1">NADH-quinone oxidoreductase subunit H</fullName>
        <ecNumber evidence="1">7.1.1.-</ecNumber>
    </recommendedName>
    <alternativeName>
        <fullName evidence="1">NADH dehydrogenase I subunit H</fullName>
    </alternativeName>
    <alternativeName>
        <fullName evidence="1">NDH-1 subunit H</fullName>
    </alternativeName>
</protein>
<feature type="chain" id="PRO_1000143627" description="NADH-quinone oxidoreductase subunit H">
    <location>
        <begin position="1"/>
        <end position="325"/>
    </location>
</feature>
<feature type="transmembrane region" description="Helical" evidence="1">
    <location>
        <begin position="11"/>
        <end position="31"/>
    </location>
</feature>
<feature type="transmembrane region" description="Helical" evidence="1">
    <location>
        <begin position="81"/>
        <end position="101"/>
    </location>
</feature>
<feature type="transmembrane region" description="Helical" evidence="1">
    <location>
        <begin position="114"/>
        <end position="134"/>
    </location>
</feature>
<feature type="transmembrane region" description="Helical" evidence="1">
    <location>
        <begin position="154"/>
        <end position="174"/>
    </location>
</feature>
<feature type="transmembrane region" description="Helical" evidence="1">
    <location>
        <begin position="186"/>
        <end position="206"/>
    </location>
</feature>
<feature type="transmembrane region" description="Helical" evidence="1">
    <location>
        <begin position="237"/>
        <end position="257"/>
    </location>
</feature>
<feature type="transmembrane region" description="Helical" evidence="1">
    <location>
        <begin position="265"/>
        <end position="285"/>
    </location>
</feature>
<feature type="transmembrane region" description="Helical" evidence="1">
    <location>
        <begin position="304"/>
        <end position="324"/>
    </location>
</feature>
<comment type="function">
    <text evidence="1">NDH-1 shuttles electrons from NADH, via FMN and iron-sulfur (Fe-S) centers, to quinones in the respiratory chain. The immediate electron acceptor for the enzyme in this species is believed to be ubiquinone. Couples the redox reaction to proton translocation (for every two electrons transferred, four hydrogen ions are translocated across the cytoplasmic membrane), and thus conserves the redox energy in a proton gradient. This subunit may bind ubiquinone.</text>
</comment>
<comment type="catalytic activity">
    <reaction evidence="1">
        <text>a quinone + NADH + 5 H(+)(in) = a quinol + NAD(+) + 4 H(+)(out)</text>
        <dbReference type="Rhea" id="RHEA:57888"/>
        <dbReference type="ChEBI" id="CHEBI:15378"/>
        <dbReference type="ChEBI" id="CHEBI:24646"/>
        <dbReference type="ChEBI" id="CHEBI:57540"/>
        <dbReference type="ChEBI" id="CHEBI:57945"/>
        <dbReference type="ChEBI" id="CHEBI:132124"/>
    </reaction>
</comment>
<comment type="subunit">
    <text evidence="1">NDH-1 is composed of 13 different subunits. Subunits NuoA, H, J, K, L, M, N constitute the membrane sector of the complex.</text>
</comment>
<comment type="subcellular location">
    <subcellularLocation>
        <location evidence="1">Cell inner membrane</location>
        <topology evidence="1">Multi-pass membrane protein</topology>
    </subcellularLocation>
</comment>
<comment type="similarity">
    <text evidence="1">Belongs to the complex I subunit 1 family.</text>
</comment>
<dbReference type="EC" id="7.1.1.-" evidence="1"/>
<dbReference type="EMBL" id="CP000901">
    <property type="protein sequence ID" value="ABX85431.1"/>
    <property type="molecule type" value="Genomic_DNA"/>
</dbReference>
<dbReference type="RefSeq" id="WP_002210274.1">
    <property type="nucleotide sequence ID" value="NZ_CP009935.1"/>
</dbReference>
<dbReference type="SMR" id="A9R6L5"/>
<dbReference type="GeneID" id="96666080"/>
<dbReference type="KEGG" id="ypg:YpAngola_A1810"/>
<dbReference type="PATRIC" id="fig|349746.12.peg.2786"/>
<dbReference type="GO" id="GO:0005886">
    <property type="term" value="C:plasma membrane"/>
    <property type="evidence" value="ECO:0007669"/>
    <property type="project" value="UniProtKB-SubCell"/>
</dbReference>
<dbReference type="GO" id="GO:0003954">
    <property type="term" value="F:NADH dehydrogenase activity"/>
    <property type="evidence" value="ECO:0007669"/>
    <property type="project" value="TreeGrafter"/>
</dbReference>
<dbReference type="GO" id="GO:0016655">
    <property type="term" value="F:oxidoreductase activity, acting on NAD(P)H, quinone or similar compound as acceptor"/>
    <property type="evidence" value="ECO:0007669"/>
    <property type="project" value="UniProtKB-UniRule"/>
</dbReference>
<dbReference type="GO" id="GO:0048038">
    <property type="term" value="F:quinone binding"/>
    <property type="evidence" value="ECO:0007669"/>
    <property type="project" value="UniProtKB-KW"/>
</dbReference>
<dbReference type="GO" id="GO:0009060">
    <property type="term" value="P:aerobic respiration"/>
    <property type="evidence" value="ECO:0007669"/>
    <property type="project" value="TreeGrafter"/>
</dbReference>
<dbReference type="HAMAP" id="MF_01350">
    <property type="entry name" value="NDH1_NuoH"/>
    <property type="match status" value="1"/>
</dbReference>
<dbReference type="InterPro" id="IPR001694">
    <property type="entry name" value="NADH_UbQ_OxRdtase_su1/FPO"/>
</dbReference>
<dbReference type="InterPro" id="IPR018086">
    <property type="entry name" value="NADH_UbQ_OxRdtase_su1_CS"/>
</dbReference>
<dbReference type="NCBIfam" id="NF004740">
    <property type="entry name" value="PRK06076.1-1"/>
    <property type="match status" value="1"/>
</dbReference>
<dbReference type="NCBIfam" id="NF004741">
    <property type="entry name" value="PRK06076.1-2"/>
    <property type="match status" value="1"/>
</dbReference>
<dbReference type="PANTHER" id="PTHR11432">
    <property type="entry name" value="NADH DEHYDROGENASE SUBUNIT 1"/>
    <property type="match status" value="1"/>
</dbReference>
<dbReference type="PANTHER" id="PTHR11432:SF3">
    <property type="entry name" value="NADH-UBIQUINONE OXIDOREDUCTASE CHAIN 1"/>
    <property type="match status" value="1"/>
</dbReference>
<dbReference type="Pfam" id="PF00146">
    <property type="entry name" value="NADHdh"/>
    <property type="match status" value="1"/>
</dbReference>
<dbReference type="PROSITE" id="PS00667">
    <property type="entry name" value="COMPLEX1_ND1_1"/>
    <property type="match status" value="1"/>
</dbReference>
<dbReference type="PROSITE" id="PS00668">
    <property type="entry name" value="COMPLEX1_ND1_2"/>
    <property type="match status" value="1"/>
</dbReference>
<name>NUOH_YERPG</name>
<proteinExistence type="inferred from homology"/>
<accession>A9R6L5</accession>
<gene>
    <name evidence="1" type="primary">nuoH</name>
    <name type="ordered locus">YpAngola_A1810</name>
</gene>
<keyword id="KW-0997">Cell inner membrane</keyword>
<keyword id="KW-1003">Cell membrane</keyword>
<keyword id="KW-0472">Membrane</keyword>
<keyword id="KW-0520">NAD</keyword>
<keyword id="KW-0874">Quinone</keyword>
<keyword id="KW-1278">Translocase</keyword>
<keyword id="KW-0812">Transmembrane</keyword>
<keyword id="KW-1133">Transmembrane helix</keyword>
<keyword id="KW-0830">Ubiquinone</keyword>
<reference key="1">
    <citation type="journal article" date="2010" name="J. Bacteriol.">
        <title>Genome sequence of the deep-rooted Yersinia pestis strain Angola reveals new insights into the evolution and pangenome of the plague bacterium.</title>
        <authorList>
            <person name="Eppinger M."/>
            <person name="Worsham P.L."/>
            <person name="Nikolich M.P."/>
            <person name="Riley D.R."/>
            <person name="Sebastian Y."/>
            <person name="Mou S."/>
            <person name="Achtman M."/>
            <person name="Lindler L.E."/>
            <person name="Ravel J."/>
        </authorList>
    </citation>
    <scope>NUCLEOTIDE SEQUENCE [LARGE SCALE GENOMIC DNA]</scope>
    <source>
        <strain>Angola</strain>
    </source>
</reference>